<organism>
    <name type="scientific">Caenorhabditis elegans</name>
    <dbReference type="NCBI Taxonomy" id="6239"/>
    <lineage>
        <taxon>Eukaryota</taxon>
        <taxon>Metazoa</taxon>
        <taxon>Ecdysozoa</taxon>
        <taxon>Nematoda</taxon>
        <taxon>Chromadorea</taxon>
        <taxon>Rhabditida</taxon>
        <taxon>Rhabditina</taxon>
        <taxon>Rhabditomorpha</taxon>
        <taxon>Rhabditoidea</taxon>
        <taxon>Rhabditidae</taxon>
        <taxon>Peloderinae</taxon>
        <taxon>Caenorhabditis</taxon>
    </lineage>
</organism>
<name>PSMD1_CAEEL</name>
<accession>Q18115</accession>
<accession>Q18114</accession>
<gene>
    <name type="primary">rpn-2</name>
    <name type="ORF">C23G10.4</name>
</gene>
<comment type="function">
    <text evidence="1">Acts as a regulatory subunit of the 26 proteasome which is involved in the ATP-dependent degradation of ubiquitinated proteins.</text>
</comment>
<comment type="alternative products">
    <event type="alternative splicing"/>
    <isoform>
        <id>Q18115-1</id>
        <name>b</name>
        <sequence type="displayed"/>
    </isoform>
    <isoform>
        <id>Q18115-2</id>
        <name>a</name>
        <sequence type="described" ref="VSP_041849"/>
    </isoform>
</comment>
<comment type="similarity">
    <text evidence="3">Belongs to the proteasome subunit S1 family.</text>
</comment>
<dbReference type="EMBL" id="FO080630">
    <property type="protein sequence ID" value="CCD65306.1"/>
    <property type="molecule type" value="Genomic_DNA"/>
</dbReference>
<dbReference type="EMBL" id="FO080630">
    <property type="protein sequence ID" value="CCD65298.1"/>
    <property type="molecule type" value="Genomic_DNA"/>
</dbReference>
<dbReference type="RefSeq" id="NP_001379706.1">
    <molecule id="Q18115-2"/>
    <property type="nucleotide sequence ID" value="NM_001392118.1"/>
</dbReference>
<dbReference type="RefSeq" id="NP_498346.2">
    <molecule id="Q18115-1"/>
    <property type="nucleotide sequence ID" value="NM_065945.5"/>
</dbReference>
<dbReference type="RefSeq" id="NP_498347.3">
    <property type="nucleotide sequence ID" value="NM_065946.5"/>
</dbReference>
<dbReference type="SMR" id="Q18115"/>
<dbReference type="BioGRID" id="41098">
    <property type="interactions" value="61"/>
</dbReference>
<dbReference type="FunCoup" id="Q18115">
    <property type="interactions" value="3110"/>
</dbReference>
<dbReference type="IntAct" id="Q18115">
    <property type="interactions" value="10"/>
</dbReference>
<dbReference type="STRING" id="6239.C23G10.4b.1"/>
<dbReference type="PaxDb" id="6239-C23G10.4b.2"/>
<dbReference type="PeptideAtlas" id="Q18115"/>
<dbReference type="EnsemblMetazoa" id="C23G10.4a.1">
    <molecule id="Q18115-2"/>
    <property type="protein sequence ID" value="C23G10.4a.1"/>
    <property type="gene ID" value="WBGene00004459"/>
</dbReference>
<dbReference type="EnsemblMetazoa" id="C23G10.4b.1">
    <molecule id="Q18115-1"/>
    <property type="protein sequence ID" value="C23G10.4b.1"/>
    <property type="gene ID" value="WBGene00004459"/>
</dbReference>
<dbReference type="GeneID" id="175877"/>
<dbReference type="KEGG" id="cel:CELE_C23G10.4"/>
<dbReference type="UCSC" id="C23G10.4a.1">
    <molecule id="Q18115-1"/>
    <property type="organism name" value="c. elegans"/>
</dbReference>
<dbReference type="AGR" id="WB:WBGene00004459"/>
<dbReference type="CTD" id="175877"/>
<dbReference type="WormBase" id="C23G10.4a">
    <molecule id="Q18115-2"/>
    <property type="protein sequence ID" value="CE40437"/>
    <property type="gene ID" value="WBGene00004459"/>
    <property type="gene designation" value="rpn-2"/>
</dbReference>
<dbReference type="WormBase" id="C23G10.4b">
    <molecule id="Q18115-1"/>
    <property type="protein sequence ID" value="CE31311"/>
    <property type="gene ID" value="WBGene00004459"/>
    <property type="gene designation" value="rpn-2"/>
</dbReference>
<dbReference type="eggNOG" id="KOG2062">
    <property type="taxonomic scope" value="Eukaryota"/>
</dbReference>
<dbReference type="GeneTree" id="ENSGT00940000153386"/>
<dbReference type="InParanoid" id="Q18115"/>
<dbReference type="OMA" id="IMFGRQE"/>
<dbReference type="OrthoDB" id="261572at2759"/>
<dbReference type="PhylomeDB" id="Q18115"/>
<dbReference type="Reactome" id="R-CEL-1234176">
    <property type="pathway name" value="Oxygen-dependent proline hydroxylation of Hypoxia-inducible Factor Alpha"/>
</dbReference>
<dbReference type="Reactome" id="R-CEL-1236978">
    <property type="pathway name" value="Cross-presentation of soluble exogenous antigens (endosomes)"/>
</dbReference>
<dbReference type="Reactome" id="R-CEL-187577">
    <property type="pathway name" value="SCF(Skp2)-mediated degradation of p27/p21"/>
</dbReference>
<dbReference type="Reactome" id="R-CEL-195253">
    <property type="pathway name" value="Degradation of beta-catenin by the destruction complex"/>
</dbReference>
<dbReference type="Reactome" id="R-CEL-349425">
    <property type="pathway name" value="Autodegradation of the E3 ubiquitin ligase COP1"/>
</dbReference>
<dbReference type="Reactome" id="R-CEL-350562">
    <property type="pathway name" value="Regulation of ornithine decarboxylase (ODC)"/>
</dbReference>
<dbReference type="Reactome" id="R-CEL-382556">
    <property type="pathway name" value="ABC-family proteins mediated transport"/>
</dbReference>
<dbReference type="Reactome" id="R-CEL-4608870">
    <property type="pathway name" value="Asymmetric localization of PCP proteins"/>
</dbReference>
<dbReference type="Reactome" id="R-CEL-4641258">
    <property type="pathway name" value="Degradation of DVL"/>
</dbReference>
<dbReference type="Reactome" id="R-CEL-5632684">
    <property type="pathway name" value="Hedgehog 'on' state"/>
</dbReference>
<dbReference type="Reactome" id="R-CEL-5687128">
    <property type="pathway name" value="MAPK6/MAPK4 signaling"/>
</dbReference>
<dbReference type="Reactome" id="R-CEL-5689603">
    <property type="pathway name" value="UCH proteinases"/>
</dbReference>
<dbReference type="Reactome" id="R-CEL-5689880">
    <property type="pathway name" value="Ub-specific processing proteases"/>
</dbReference>
<dbReference type="Reactome" id="R-CEL-6798695">
    <property type="pathway name" value="Neutrophil degranulation"/>
</dbReference>
<dbReference type="Reactome" id="R-CEL-68949">
    <property type="pathway name" value="Orc1 removal from chromatin"/>
</dbReference>
<dbReference type="Reactome" id="R-CEL-69017">
    <property type="pathway name" value="CDK-mediated phosphorylation and removal of Cdc6"/>
</dbReference>
<dbReference type="Reactome" id="R-CEL-69601">
    <property type="pathway name" value="Ubiquitin Mediated Degradation of Phosphorylated Cdc25A"/>
</dbReference>
<dbReference type="Reactome" id="R-CEL-75815">
    <property type="pathway name" value="Ubiquitin-dependent degradation of Cyclin D"/>
</dbReference>
<dbReference type="Reactome" id="R-CEL-8854050">
    <property type="pathway name" value="FBXL7 down-regulates AURKA during mitotic entry and in early mitosis"/>
</dbReference>
<dbReference type="Reactome" id="R-CEL-8939902">
    <property type="pathway name" value="Regulation of RUNX2 expression and activity"/>
</dbReference>
<dbReference type="Reactome" id="R-CEL-8941858">
    <property type="pathway name" value="Regulation of RUNX3 expression and activity"/>
</dbReference>
<dbReference type="Reactome" id="R-CEL-8948751">
    <property type="pathway name" value="Regulation of PTEN stability and activity"/>
</dbReference>
<dbReference type="Reactome" id="R-CEL-8951664">
    <property type="pathway name" value="Neddylation"/>
</dbReference>
<dbReference type="Reactome" id="R-CEL-9755511">
    <property type="pathway name" value="KEAP1-NFE2L2 pathway"/>
</dbReference>
<dbReference type="Reactome" id="R-CEL-9762114">
    <property type="pathway name" value="GSK3B and BTRC:CUL1-mediated-degradation of NFE2L2"/>
</dbReference>
<dbReference type="Reactome" id="R-CEL-983168">
    <property type="pathway name" value="Antigen processing: Ubiquitination &amp; Proteasome degradation"/>
</dbReference>
<dbReference type="Reactome" id="R-CEL-9907900">
    <property type="pathway name" value="Proteasome assembly"/>
</dbReference>
<dbReference type="SignaLink" id="Q18115"/>
<dbReference type="PRO" id="PR:Q18115"/>
<dbReference type="Proteomes" id="UP000001940">
    <property type="component" value="Chromosome III"/>
</dbReference>
<dbReference type="Bgee" id="WBGene00004459">
    <property type="expression patterns" value="Expressed in adult organism and 4 other cell types or tissues"/>
</dbReference>
<dbReference type="GO" id="GO:0005938">
    <property type="term" value="C:cell cortex"/>
    <property type="evidence" value="ECO:0000314"/>
    <property type="project" value="WormBase"/>
</dbReference>
<dbReference type="GO" id="GO:0005737">
    <property type="term" value="C:cytoplasm"/>
    <property type="evidence" value="ECO:0000314"/>
    <property type="project" value="WormBase"/>
</dbReference>
<dbReference type="GO" id="GO:0072686">
    <property type="term" value="C:mitotic spindle"/>
    <property type="evidence" value="ECO:0000314"/>
    <property type="project" value="WormBase"/>
</dbReference>
<dbReference type="GO" id="GO:0031965">
    <property type="term" value="C:nuclear membrane"/>
    <property type="evidence" value="ECO:0000314"/>
    <property type="project" value="WormBase"/>
</dbReference>
<dbReference type="GO" id="GO:0005634">
    <property type="term" value="C:nucleus"/>
    <property type="evidence" value="ECO:0000314"/>
    <property type="project" value="WormBase"/>
</dbReference>
<dbReference type="GO" id="GO:0005886">
    <property type="term" value="C:plasma membrane"/>
    <property type="evidence" value="ECO:0000314"/>
    <property type="project" value="WormBase"/>
</dbReference>
<dbReference type="GO" id="GO:0008540">
    <property type="term" value="C:proteasome regulatory particle, base subcomplex"/>
    <property type="evidence" value="ECO:0000318"/>
    <property type="project" value="GO_Central"/>
</dbReference>
<dbReference type="GO" id="GO:0034515">
    <property type="term" value="C:proteasome storage granule"/>
    <property type="evidence" value="ECO:0000318"/>
    <property type="project" value="GO_Central"/>
</dbReference>
<dbReference type="GO" id="GO:0030234">
    <property type="term" value="F:enzyme regulator activity"/>
    <property type="evidence" value="ECO:0007669"/>
    <property type="project" value="InterPro"/>
</dbReference>
<dbReference type="GO" id="GO:0005080">
    <property type="term" value="F:protein kinase C binding"/>
    <property type="evidence" value="ECO:0000353"/>
    <property type="project" value="WormBase"/>
</dbReference>
<dbReference type="GO" id="GO:0043161">
    <property type="term" value="P:proteasome-mediated ubiquitin-dependent protein catabolic process"/>
    <property type="evidence" value="ECO:0000318"/>
    <property type="project" value="GO_Central"/>
</dbReference>
<dbReference type="GO" id="GO:0042176">
    <property type="term" value="P:regulation of protein catabolic process"/>
    <property type="evidence" value="ECO:0007669"/>
    <property type="project" value="InterPro"/>
</dbReference>
<dbReference type="FunFam" id="1.25.10.10:FF:000017">
    <property type="entry name" value="26S proteasome non-ATPase regulatory subunit 1"/>
    <property type="match status" value="1"/>
</dbReference>
<dbReference type="Gene3D" id="1.25.10.10">
    <property type="entry name" value="Leucine-rich Repeat Variant"/>
    <property type="match status" value="1"/>
</dbReference>
<dbReference type="InterPro" id="IPR016642">
    <property type="entry name" value="26S_Psome_Rpn2"/>
</dbReference>
<dbReference type="InterPro" id="IPR011989">
    <property type="entry name" value="ARM-like"/>
</dbReference>
<dbReference type="InterPro" id="IPR016024">
    <property type="entry name" value="ARM-type_fold"/>
</dbReference>
<dbReference type="InterPro" id="IPR002015">
    <property type="entry name" value="Proteasome/cyclosome_rpt"/>
</dbReference>
<dbReference type="InterPro" id="IPR048570">
    <property type="entry name" value="PSMD1_RPN2_N"/>
</dbReference>
<dbReference type="InterPro" id="IPR040623">
    <property type="entry name" value="RPN2_C"/>
</dbReference>
<dbReference type="PANTHER" id="PTHR10943">
    <property type="entry name" value="26S PROTEASOME NON-ATPASE REGULATORY SUBUNIT"/>
    <property type="match status" value="1"/>
</dbReference>
<dbReference type="PANTHER" id="PTHR10943:SF2">
    <property type="entry name" value="26S PROTEASOME NON-ATPASE REGULATORY SUBUNIT 1"/>
    <property type="match status" value="1"/>
</dbReference>
<dbReference type="Pfam" id="PF01851">
    <property type="entry name" value="PC_rep"/>
    <property type="match status" value="3"/>
</dbReference>
<dbReference type="Pfam" id="PF18004">
    <property type="entry name" value="RPN2_C"/>
    <property type="match status" value="1"/>
</dbReference>
<dbReference type="Pfam" id="PF21505">
    <property type="entry name" value="RPN2_N"/>
    <property type="match status" value="1"/>
</dbReference>
<dbReference type="PIRSF" id="PIRSF015947">
    <property type="entry name" value="26S_Psome_Rpn2"/>
    <property type="match status" value="1"/>
</dbReference>
<dbReference type="SUPFAM" id="SSF48371">
    <property type="entry name" value="ARM repeat"/>
    <property type="match status" value="1"/>
</dbReference>
<evidence type="ECO:0000250" key="1"/>
<evidence type="ECO:0000256" key="2">
    <source>
        <dbReference type="SAM" id="MobiDB-lite"/>
    </source>
</evidence>
<evidence type="ECO:0000305" key="3"/>
<feature type="chain" id="PRO_0000173803" description="26S proteasome non-ATPase regulatory subunit 1">
    <location>
        <begin position="1"/>
        <end position="965"/>
    </location>
</feature>
<feature type="repeat" description="PC 1">
    <location>
        <begin position="380"/>
        <end position="413"/>
    </location>
</feature>
<feature type="repeat" description="PC 2">
    <location>
        <begin position="418"/>
        <end position="452"/>
    </location>
</feature>
<feature type="repeat" description="PC 3">
    <location>
        <begin position="454"/>
        <end position="488"/>
    </location>
</feature>
<feature type="repeat" description="PC 4">
    <location>
        <begin position="489"/>
        <end position="523"/>
    </location>
</feature>
<feature type="repeat" description="PC 5">
    <location>
        <begin position="560"/>
        <end position="595"/>
    </location>
</feature>
<feature type="repeat" description="PC 6">
    <location>
        <begin position="630"/>
        <end position="664"/>
    </location>
</feature>
<feature type="repeat" description="PC 7">
    <location>
        <begin position="665"/>
        <end position="706"/>
    </location>
</feature>
<feature type="repeat" description="PC 8">
    <location>
        <begin position="708"/>
        <end position="738"/>
    </location>
</feature>
<feature type="region of interest" description="Disordered" evidence="2">
    <location>
        <begin position="836"/>
        <end position="889"/>
    </location>
</feature>
<feature type="region of interest" description="Disordered" evidence="2">
    <location>
        <begin position="943"/>
        <end position="965"/>
    </location>
</feature>
<feature type="compositionally biased region" description="Low complexity" evidence="2">
    <location>
        <begin position="836"/>
        <end position="856"/>
    </location>
</feature>
<feature type="compositionally biased region" description="Basic and acidic residues" evidence="2">
    <location>
        <begin position="863"/>
        <end position="882"/>
    </location>
</feature>
<feature type="splice variant" id="VSP_041849" description="In isoform a." evidence="3">
    <location>
        <begin position="872"/>
        <end position="965"/>
    </location>
</feature>
<sequence>MLTLLNRWRSQPGGASNAAAFIRVLESPKSAVTDKVLVLKAFNDWDVLVNTWFEVADALPAVEQLLDNNTFPEHSSAALLVSKVYFCLEQYERALEFALRGDFNVVPATRTGLGNDAEYVNKIIETAIDTYKTLSKQGSGIPQKLRDLIDRIVARNLDKREIWFVISLGFETTNLAMIDRAISAMPADLTIKNQTTLVETLNRVVNGAFDRSFRFQVIDTVIKTYLKCPSPDMSKICECYVLTDNAEAAADTITSLIAKSLSTRAYQIAFDLYETASQGFLDRVLKRFQQQDARDEKSMEKIHSILKGHETVKAYLDFFVRHNHTDSVLMEEIKENIRTASAHNALLISNGLMQYGTTCDDFLRNNLNWVSKATNWNKFNAVASLGLIHHGQESSAMKVLEPYLPKESVEGFGFKEGGAMLAYGLIHAKHGDATAMSTLAQWLKTAENEPVRHGACLGFGVAGLGSSSVSNYEKVREVLQRDEAVSGESAGIAMGLIMAGHLNQEVFNELKQYTVDTQHDKTQRGIRTGLACAAFGLQGDAEPYIKEAIGAKSNPMLRSTGICMLSMAYAGTGSPDVVRRLLEKVATDPNLDVKRYATIGIGFVLSKDPSTCLSYVAMLTEHFNGHVRYGAAMALGIACAGTGNMEAIALIEPMISDKEGFVRKGALLSLALIMCQQTDYTCPKVNGFRKQLLKKIGEKNEDSLVKFGAIIAQGLLDIGGQNAAVTMQNSDKQPDMGSMVGMMCFLHGWFWHSMHFFIALAAKPSCLVMMNENLKIPVLDYICHANSQKFAYPPRAESKKDKDVKKIETVVLSITGKKNASKKLIAEEKKRREAAASASSAAAAPSSSSTSGTAPAAEDEKMEVDQPGKSKKEKAPEKDTKPLHRLQNPARVIPAQRQLISISDARAYSPMKPLYKGGIIVADRVDKEREEKLVSEVVTQVNTPASSGNTENKPHSTFEININDF</sequence>
<protein>
    <recommendedName>
        <fullName>26S proteasome non-ATPase regulatory subunit 1</fullName>
    </recommendedName>
    <alternativeName>
        <fullName>26S proteasome regulatory subunit rpn-2</fullName>
    </alternativeName>
</protein>
<reference key="1">
    <citation type="journal article" date="1998" name="Science">
        <title>Genome sequence of the nematode C. elegans: a platform for investigating biology.</title>
        <authorList>
            <consortium name="The C. elegans sequencing consortium"/>
        </authorList>
    </citation>
    <scope>NUCLEOTIDE SEQUENCE [LARGE SCALE GENOMIC DNA]</scope>
    <scope>ALTERNATIVE SPLICING</scope>
    <source>
        <strain>Bristol N2</strain>
    </source>
</reference>
<keyword id="KW-0025">Alternative splicing</keyword>
<keyword id="KW-0647">Proteasome</keyword>
<keyword id="KW-1185">Reference proteome</keyword>
<keyword id="KW-0677">Repeat</keyword>
<proteinExistence type="inferred from homology"/>